<name>RN2B_RANLU</name>
<protein>
    <recommendedName>
        <fullName>Ranatuerin-2Lb</fullName>
    </recommendedName>
</protein>
<accession>P82829</accession>
<sequence>GILSSIKGVAKGVAKNVAAQLLDTLKCKITGC</sequence>
<feature type="peptide" id="PRO_0000044660" description="Ranatuerin-2Lb">
    <location>
        <begin position="1"/>
        <end position="32"/>
    </location>
</feature>
<feature type="disulfide bond" evidence="1">
    <location>
        <begin position="27"/>
        <end position="32"/>
    </location>
</feature>
<keyword id="KW-0878">Amphibian defense peptide</keyword>
<keyword id="KW-0044">Antibiotic</keyword>
<keyword id="KW-0929">Antimicrobial</keyword>
<keyword id="KW-0903">Direct protein sequencing</keyword>
<keyword id="KW-1015">Disulfide bond</keyword>
<keyword id="KW-0295">Fungicide</keyword>
<keyword id="KW-0964">Secreted</keyword>
<reference key="1">
    <citation type="journal article" date="2000" name="Eur. J. Biochem.">
        <title>Peptides with antimicrobial activity from four different families isolated from the skins of the North American frogs Rana luteiventris, Rana berlandieri and Rana pipiens.</title>
        <authorList>
            <person name="Goraya J."/>
            <person name="Wang Y."/>
            <person name="Li Z."/>
            <person name="O'Flaherty M."/>
            <person name="Knoop F.C."/>
            <person name="Platz J.E."/>
            <person name="Conlon J.M."/>
        </authorList>
    </citation>
    <scope>PROTEIN SEQUENCE</scope>
    <scope>FUNCTION</scope>
    <scope>MASS SPECTROMETRY</scope>
    <source>
        <tissue>Skin secretion</tissue>
    </source>
</reference>
<dbReference type="SMR" id="P82829"/>
<dbReference type="GO" id="GO:0005576">
    <property type="term" value="C:extracellular region"/>
    <property type="evidence" value="ECO:0007669"/>
    <property type="project" value="UniProtKB-SubCell"/>
</dbReference>
<dbReference type="GO" id="GO:0042742">
    <property type="term" value="P:defense response to bacterium"/>
    <property type="evidence" value="ECO:0007669"/>
    <property type="project" value="UniProtKB-KW"/>
</dbReference>
<dbReference type="GO" id="GO:0050832">
    <property type="term" value="P:defense response to fungus"/>
    <property type="evidence" value="ECO:0007669"/>
    <property type="project" value="UniProtKB-KW"/>
</dbReference>
<dbReference type="GO" id="GO:0031640">
    <property type="term" value="P:killing of cells of another organism"/>
    <property type="evidence" value="ECO:0007669"/>
    <property type="project" value="UniProtKB-KW"/>
</dbReference>
<dbReference type="InterPro" id="IPR012521">
    <property type="entry name" value="Antimicrobial_frog_2"/>
</dbReference>
<dbReference type="Pfam" id="PF08023">
    <property type="entry name" value="Antimicrobial_2"/>
    <property type="match status" value="1"/>
</dbReference>
<organism>
    <name type="scientific">Rana luteiventris</name>
    <name type="common">Columbia spotted frog</name>
    <name type="synonym">Rana pretiosa luteiventris</name>
    <dbReference type="NCBI Taxonomy" id="58176"/>
    <lineage>
        <taxon>Eukaryota</taxon>
        <taxon>Metazoa</taxon>
        <taxon>Chordata</taxon>
        <taxon>Craniata</taxon>
        <taxon>Vertebrata</taxon>
        <taxon>Euteleostomi</taxon>
        <taxon>Amphibia</taxon>
        <taxon>Batrachia</taxon>
        <taxon>Anura</taxon>
        <taxon>Neobatrachia</taxon>
        <taxon>Ranoidea</taxon>
        <taxon>Ranidae</taxon>
        <taxon>Rana</taxon>
        <taxon>Rana</taxon>
    </lineage>
</organism>
<comment type="function">
    <text evidence="2">Antibacterial activity against Gram-positive bacterium S.aureus and Gram-negative bacterium E.coli. Has activity against C.albicans.</text>
</comment>
<comment type="subcellular location">
    <subcellularLocation>
        <location>Secreted</location>
    </subcellularLocation>
</comment>
<comment type="tissue specificity">
    <text>Expressed by the skin glands.</text>
</comment>
<comment type="mass spectrometry"/>
<comment type="similarity">
    <text evidence="3">Belongs to the frog skin active peptide (FSAP) family. Ranatuerin subfamily.</text>
</comment>
<proteinExistence type="evidence at protein level"/>
<evidence type="ECO:0000250" key="1"/>
<evidence type="ECO:0000269" key="2">
    <source>
    </source>
</evidence>
<evidence type="ECO:0000305" key="3"/>